<comment type="function">
    <text evidence="1">Catalyzes the reversible reaction in which hydroxymethyl group from 5,10-methylenetetrahydrofolate is transferred onto alpha-ketoisovalerate to form ketopantoate.</text>
</comment>
<comment type="catalytic activity">
    <reaction evidence="1">
        <text>3-methyl-2-oxobutanoate + (6R)-5,10-methylene-5,6,7,8-tetrahydrofolate + H2O = 2-dehydropantoate + (6S)-5,6,7,8-tetrahydrofolate</text>
        <dbReference type="Rhea" id="RHEA:11824"/>
        <dbReference type="ChEBI" id="CHEBI:11561"/>
        <dbReference type="ChEBI" id="CHEBI:11851"/>
        <dbReference type="ChEBI" id="CHEBI:15377"/>
        <dbReference type="ChEBI" id="CHEBI:15636"/>
        <dbReference type="ChEBI" id="CHEBI:57453"/>
        <dbReference type="EC" id="2.1.2.11"/>
    </reaction>
</comment>
<comment type="cofactor">
    <cofactor evidence="1">
        <name>Mg(2+)</name>
        <dbReference type="ChEBI" id="CHEBI:18420"/>
    </cofactor>
    <text evidence="1">Binds 1 Mg(2+) ion per subunit.</text>
</comment>
<comment type="pathway">
    <text evidence="1">Cofactor biosynthesis; (R)-pantothenate biosynthesis; (R)-pantoate from 3-methyl-2-oxobutanoate: step 1/2.</text>
</comment>
<comment type="subunit">
    <text evidence="1">Homodecamer; pentamer of dimers.</text>
</comment>
<comment type="subcellular location">
    <subcellularLocation>
        <location evidence="1">Cytoplasm</location>
    </subcellularLocation>
</comment>
<comment type="similarity">
    <text evidence="1">Belongs to the PanB family.</text>
</comment>
<reference key="1">
    <citation type="journal article" date="2003" name="Science">
        <title>A genomic view of the human-Bacteroides thetaiotaomicron symbiosis.</title>
        <authorList>
            <person name="Xu J."/>
            <person name="Bjursell M.K."/>
            <person name="Himrod J."/>
            <person name="Deng S."/>
            <person name="Carmichael L.K."/>
            <person name="Chiang H.C."/>
            <person name="Hooper L.V."/>
            <person name="Gordon J.I."/>
        </authorList>
    </citation>
    <scope>NUCLEOTIDE SEQUENCE [LARGE SCALE GENOMIC DNA]</scope>
    <source>
        <strain>ATCC 29148 / DSM 2079 / JCM 5827 / CCUG 10774 / NCTC 10582 / VPI-5482 / E50</strain>
    </source>
</reference>
<accession>Q8A9W7</accession>
<name>PANB_BACTN</name>
<organism>
    <name type="scientific">Bacteroides thetaiotaomicron (strain ATCC 29148 / DSM 2079 / JCM 5827 / CCUG 10774 / NCTC 10582 / VPI-5482 / E50)</name>
    <dbReference type="NCBI Taxonomy" id="226186"/>
    <lineage>
        <taxon>Bacteria</taxon>
        <taxon>Pseudomonadati</taxon>
        <taxon>Bacteroidota</taxon>
        <taxon>Bacteroidia</taxon>
        <taxon>Bacteroidales</taxon>
        <taxon>Bacteroidaceae</taxon>
        <taxon>Bacteroides</taxon>
    </lineage>
</organism>
<protein>
    <recommendedName>
        <fullName evidence="1">3-methyl-2-oxobutanoate hydroxymethyltransferase</fullName>
        <ecNumber evidence="1">2.1.2.11</ecNumber>
    </recommendedName>
    <alternativeName>
        <fullName evidence="1">Ketopantoate hydroxymethyltransferase</fullName>
        <shortName evidence="1">KPHMT</shortName>
    </alternativeName>
</protein>
<gene>
    <name evidence="1" type="primary">panB</name>
    <name type="ordered locus">BT_0698</name>
</gene>
<keyword id="KW-0963">Cytoplasm</keyword>
<keyword id="KW-0460">Magnesium</keyword>
<keyword id="KW-0479">Metal-binding</keyword>
<keyword id="KW-0566">Pantothenate biosynthesis</keyword>
<keyword id="KW-1185">Reference proteome</keyword>
<keyword id="KW-0808">Transferase</keyword>
<dbReference type="EC" id="2.1.2.11" evidence="1"/>
<dbReference type="EMBL" id="AE015928">
    <property type="protein sequence ID" value="AAO75805.1"/>
    <property type="molecule type" value="Genomic_DNA"/>
</dbReference>
<dbReference type="RefSeq" id="NP_809611.1">
    <property type="nucleotide sequence ID" value="NC_004663.1"/>
</dbReference>
<dbReference type="RefSeq" id="WP_008765576.1">
    <property type="nucleotide sequence ID" value="NC_004663.1"/>
</dbReference>
<dbReference type="SMR" id="Q8A9W7"/>
<dbReference type="FunCoup" id="Q8A9W7">
    <property type="interactions" value="439"/>
</dbReference>
<dbReference type="STRING" id="226186.BT_0698"/>
<dbReference type="PaxDb" id="226186-BT_0698"/>
<dbReference type="EnsemblBacteria" id="AAO75805">
    <property type="protein sequence ID" value="AAO75805"/>
    <property type="gene ID" value="BT_0698"/>
</dbReference>
<dbReference type="GeneID" id="60926666"/>
<dbReference type="KEGG" id="bth:BT_0698"/>
<dbReference type="PATRIC" id="fig|226186.12.peg.713"/>
<dbReference type="eggNOG" id="COG0413">
    <property type="taxonomic scope" value="Bacteria"/>
</dbReference>
<dbReference type="HOGENOM" id="CLU_036645_1_0_10"/>
<dbReference type="InParanoid" id="Q8A9W7"/>
<dbReference type="OrthoDB" id="9781789at2"/>
<dbReference type="UniPathway" id="UPA00028">
    <property type="reaction ID" value="UER00003"/>
</dbReference>
<dbReference type="Proteomes" id="UP000001414">
    <property type="component" value="Chromosome"/>
</dbReference>
<dbReference type="GO" id="GO:0005737">
    <property type="term" value="C:cytoplasm"/>
    <property type="evidence" value="ECO:0000318"/>
    <property type="project" value="GO_Central"/>
</dbReference>
<dbReference type="GO" id="GO:0003864">
    <property type="term" value="F:3-methyl-2-oxobutanoate hydroxymethyltransferase activity"/>
    <property type="evidence" value="ECO:0000318"/>
    <property type="project" value="GO_Central"/>
</dbReference>
<dbReference type="GO" id="GO:0000287">
    <property type="term" value="F:magnesium ion binding"/>
    <property type="evidence" value="ECO:0000318"/>
    <property type="project" value="GO_Central"/>
</dbReference>
<dbReference type="GO" id="GO:0015940">
    <property type="term" value="P:pantothenate biosynthetic process"/>
    <property type="evidence" value="ECO:0000318"/>
    <property type="project" value="GO_Central"/>
</dbReference>
<dbReference type="CDD" id="cd06557">
    <property type="entry name" value="KPHMT-like"/>
    <property type="match status" value="1"/>
</dbReference>
<dbReference type="FunFam" id="3.20.20.60:FF:000017">
    <property type="entry name" value="3-methyl-2-oxobutanoate hydroxymethyltransferase"/>
    <property type="match status" value="1"/>
</dbReference>
<dbReference type="Gene3D" id="3.20.20.60">
    <property type="entry name" value="Phosphoenolpyruvate-binding domains"/>
    <property type="match status" value="1"/>
</dbReference>
<dbReference type="HAMAP" id="MF_00156">
    <property type="entry name" value="PanB"/>
    <property type="match status" value="1"/>
</dbReference>
<dbReference type="InterPro" id="IPR003700">
    <property type="entry name" value="Pantoate_hydroxy_MeTrfase"/>
</dbReference>
<dbReference type="InterPro" id="IPR015813">
    <property type="entry name" value="Pyrv/PenolPyrv_kinase-like_dom"/>
</dbReference>
<dbReference type="InterPro" id="IPR040442">
    <property type="entry name" value="Pyrv_kinase-like_dom_sf"/>
</dbReference>
<dbReference type="NCBIfam" id="TIGR00222">
    <property type="entry name" value="panB"/>
    <property type="match status" value="1"/>
</dbReference>
<dbReference type="NCBIfam" id="NF001452">
    <property type="entry name" value="PRK00311.1"/>
    <property type="match status" value="1"/>
</dbReference>
<dbReference type="PANTHER" id="PTHR20881">
    <property type="entry name" value="3-METHYL-2-OXOBUTANOATE HYDROXYMETHYLTRANSFERASE"/>
    <property type="match status" value="1"/>
</dbReference>
<dbReference type="PANTHER" id="PTHR20881:SF0">
    <property type="entry name" value="3-METHYL-2-OXOBUTANOATE HYDROXYMETHYLTRANSFERASE"/>
    <property type="match status" value="1"/>
</dbReference>
<dbReference type="Pfam" id="PF02548">
    <property type="entry name" value="Pantoate_transf"/>
    <property type="match status" value="1"/>
</dbReference>
<dbReference type="PIRSF" id="PIRSF000388">
    <property type="entry name" value="Pantoate_hydroxy_MeTrfase"/>
    <property type="match status" value="1"/>
</dbReference>
<dbReference type="SUPFAM" id="SSF51621">
    <property type="entry name" value="Phosphoenolpyruvate/pyruvate domain"/>
    <property type="match status" value="1"/>
</dbReference>
<evidence type="ECO:0000255" key="1">
    <source>
        <dbReference type="HAMAP-Rule" id="MF_00156"/>
    </source>
</evidence>
<proteinExistence type="inferred from homology"/>
<sequence>MAGYISDDTRKVTTHRLVEMKQRGERISMLTSYDYTMAQIVDGAGMDVILVGDSASNVMAGNVTTLPITLDQMIYHAKSVVRGVKRAMVVVDMPFGSYQGNEMEGLASAIRIMKESHADALKLEGGEEIIDTVKRIISAGIPVMGHLGLMPQSINKYGTYTVRAKDDSEAEKLIRDAHLLEEAGCFAIVLEKIPATLAERVASELTIPIIGIGAGGHVDGQVLVIQDMLGMNNGFRPRFLRRYADLYTVMTDAISRYVSDVKNCDFPNEKEQY</sequence>
<feature type="chain" id="PRO_0000184817" description="3-methyl-2-oxobutanoate hydroxymethyltransferase">
    <location>
        <begin position="1"/>
        <end position="273"/>
    </location>
</feature>
<feature type="active site" description="Proton acceptor" evidence="1">
    <location>
        <position position="191"/>
    </location>
</feature>
<feature type="binding site" evidence="1">
    <location>
        <begin position="53"/>
        <end position="54"/>
    </location>
    <ligand>
        <name>3-methyl-2-oxobutanoate</name>
        <dbReference type="ChEBI" id="CHEBI:11851"/>
    </ligand>
</feature>
<feature type="binding site" evidence="1">
    <location>
        <position position="53"/>
    </location>
    <ligand>
        <name>Mg(2+)</name>
        <dbReference type="ChEBI" id="CHEBI:18420"/>
    </ligand>
</feature>
<feature type="binding site" evidence="1">
    <location>
        <position position="92"/>
    </location>
    <ligand>
        <name>3-methyl-2-oxobutanoate</name>
        <dbReference type="ChEBI" id="CHEBI:11851"/>
    </ligand>
</feature>
<feature type="binding site" evidence="1">
    <location>
        <position position="92"/>
    </location>
    <ligand>
        <name>Mg(2+)</name>
        <dbReference type="ChEBI" id="CHEBI:18420"/>
    </ligand>
</feature>
<feature type="binding site" evidence="1">
    <location>
        <position position="122"/>
    </location>
    <ligand>
        <name>3-methyl-2-oxobutanoate</name>
        <dbReference type="ChEBI" id="CHEBI:11851"/>
    </ligand>
</feature>
<feature type="binding site" evidence="1">
    <location>
        <position position="124"/>
    </location>
    <ligand>
        <name>Mg(2+)</name>
        <dbReference type="ChEBI" id="CHEBI:18420"/>
    </ligand>
</feature>